<organism>
    <name type="scientific">Arabidopsis thaliana</name>
    <name type="common">Mouse-ear cress</name>
    <dbReference type="NCBI Taxonomy" id="3702"/>
    <lineage>
        <taxon>Eukaryota</taxon>
        <taxon>Viridiplantae</taxon>
        <taxon>Streptophyta</taxon>
        <taxon>Embryophyta</taxon>
        <taxon>Tracheophyta</taxon>
        <taxon>Spermatophyta</taxon>
        <taxon>Magnoliopsida</taxon>
        <taxon>eudicotyledons</taxon>
        <taxon>Gunneridae</taxon>
        <taxon>Pentapetalae</taxon>
        <taxon>rosids</taxon>
        <taxon>malvids</taxon>
        <taxon>Brassicales</taxon>
        <taxon>Brassicaceae</taxon>
        <taxon>Camelineae</taxon>
        <taxon>Arabidopsis</taxon>
    </lineage>
</organism>
<keyword id="KW-0938">Abscisic acid signaling pathway</keyword>
<keyword id="KW-0010">Activator</keyword>
<keyword id="KW-0238">DNA-binding</keyword>
<keyword id="KW-0539">Nucleus</keyword>
<keyword id="KW-1185">Reference proteome</keyword>
<keyword id="KW-0346">Stress response</keyword>
<keyword id="KW-0804">Transcription</keyword>
<keyword id="KW-0805">Transcription regulation</keyword>
<gene>
    <name type="primary">DREB2C</name>
    <name type="synonym">ERF048</name>
    <name type="ordered locus">At2g40340</name>
    <name type="ORF">T07M07.24</name>
    <name type="ORF">T3G21.11</name>
</gene>
<accession>Q8LFR2</accession>
<accession>Q0V7R5</accession>
<accession>Q8S8E2</accession>
<accession>Q9S7X4</accession>
<dbReference type="EMBL" id="AF085279">
    <property type="protein sequence ID" value="AAD25951.1"/>
    <property type="status" value="ALT_SEQ"/>
    <property type="molecule type" value="Genomic_DNA"/>
</dbReference>
<dbReference type="EMBL" id="AC007020">
    <property type="protein sequence ID" value="AAD25669.2"/>
    <property type="molecule type" value="Genomic_DNA"/>
</dbReference>
<dbReference type="EMBL" id="CP002685">
    <property type="protein sequence ID" value="AEC09816.1"/>
    <property type="molecule type" value="Genomic_DNA"/>
</dbReference>
<dbReference type="EMBL" id="BT026505">
    <property type="protein sequence ID" value="ABH04612.1"/>
    <property type="molecule type" value="mRNA"/>
</dbReference>
<dbReference type="EMBL" id="AY084695">
    <property type="protein sequence ID" value="AAM61256.1"/>
    <property type="molecule type" value="mRNA"/>
</dbReference>
<dbReference type="PIR" id="C84828">
    <property type="entry name" value="C84828"/>
</dbReference>
<dbReference type="RefSeq" id="NP_001325151.1">
    <property type="nucleotide sequence ID" value="NM_001336831.1"/>
</dbReference>
<dbReference type="RefSeq" id="NP_001325152.1">
    <property type="nucleotide sequence ID" value="NM_001336832.1"/>
</dbReference>
<dbReference type="RefSeq" id="NP_001325154.1">
    <property type="nucleotide sequence ID" value="NM_001336829.1"/>
</dbReference>
<dbReference type="RefSeq" id="NP_565929.1">
    <property type="nucleotide sequence ID" value="NM_129594.3"/>
</dbReference>
<dbReference type="SMR" id="Q8LFR2"/>
<dbReference type="BioGRID" id="3965">
    <property type="interactions" value="5"/>
</dbReference>
<dbReference type="FunCoup" id="Q8LFR2">
    <property type="interactions" value="22"/>
</dbReference>
<dbReference type="IntAct" id="Q8LFR2">
    <property type="interactions" value="2"/>
</dbReference>
<dbReference type="STRING" id="3702.Q8LFR2"/>
<dbReference type="PaxDb" id="3702-AT2G40340.1"/>
<dbReference type="ProteomicsDB" id="242294"/>
<dbReference type="EnsemblPlants" id="AT2G40340.1">
    <property type="protein sequence ID" value="AT2G40340.1"/>
    <property type="gene ID" value="AT2G40340"/>
</dbReference>
<dbReference type="GeneID" id="818627"/>
<dbReference type="Gramene" id="AT2G40340.1">
    <property type="protein sequence ID" value="AT2G40340.1"/>
    <property type="gene ID" value="AT2G40340"/>
</dbReference>
<dbReference type="KEGG" id="ath:AT2G40340"/>
<dbReference type="Araport" id="AT2G40340"/>
<dbReference type="TAIR" id="AT2G40340">
    <property type="gene designation" value="DREB2C"/>
</dbReference>
<dbReference type="eggNOG" id="ENOG502QTBU">
    <property type="taxonomic scope" value="Eukaryota"/>
</dbReference>
<dbReference type="HOGENOM" id="CLU_046486_0_0_1"/>
<dbReference type="InParanoid" id="Q8LFR2"/>
<dbReference type="OrthoDB" id="550883at2759"/>
<dbReference type="PhylomeDB" id="Q8LFR2"/>
<dbReference type="PRO" id="PR:Q8LFR2"/>
<dbReference type="Proteomes" id="UP000006548">
    <property type="component" value="Chromosome 2"/>
</dbReference>
<dbReference type="ExpressionAtlas" id="Q8LFR2">
    <property type="expression patterns" value="baseline and differential"/>
</dbReference>
<dbReference type="GO" id="GO:0005634">
    <property type="term" value="C:nucleus"/>
    <property type="evidence" value="ECO:0007669"/>
    <property type="project" value="UniProtKB-SubCell"/>
</dbReference>
<dbReference type="GO" id="GO:0003677">
    <property type="term" value="F:DNA binding"/>
    <property type="evidence" value="ECO:0007669"/>
    <property type="project" value="UniProtKB-KW"/>
</dbReference>
<dbReference type="GO" id="GO:0003700">
    <property type="term" value="F:DNA-binding transcription factor activity"/>
    <property type="evidence" value="ECO:0000314"/>
    <property type="project" value="TAIR"/>
</dbReference>
<dbReference type="GO" id="GO:0009738">
    <property type="term" value="P:abscisic acid-activated signaling pathway"/>
    <property type="evidence" value="ECO:0007669"/>
    <property type="project" value="UniProtKB-KW"/>
</dbReference>
<dbReference type="GO" id="GO:0010286">
    <property type="term" value="P:heat acclimation"/>
    <property type="evidence" value="ECO:0000270"/>
    <property type="project" value="TAIR"/>
</dbReference>
<dbReference type="GO" id="GO:0009737">
    <property type="term" value="P:response to abscisic acid"/>
    <property type="evidence" value="ECO:0000315"/>
    <property type="project" value="TAIR"/>
</dbReference>
<dbReference type="CDD" id="cd00018">
    <property type="entry name" value="AP2"/>
    <property type="match status" value="1"/>
</dbReference>
<dbReference type="FunFam" id="3.30.730.10:FF:000001">
    <property type="entry name" value="Ethylene-responsive transcription factor 2"/>
    <property type="match status" value="1"/>
</dbReference>
<dbReference type="Gene3D" id="3.30.730.10">
    <property type="entry name" value="AP2/ERF domain"/>
    <property type="match status" value="1"/>
</dbReference>
<dbReference type="InterPro" id="IPR001471">
    <property type="entry name" value="AP2/ERF_dom"/>
</dbReference>
<dbReference type="InterPro" id="IPR036955">
    <property type="entry name" value="AP2/ERF_dom_sf"/>
</dbReference>
<dbReference type="InterPro" id="IPR016177">
    <property type="entry name" value="DNA-bd_dom_sf"/>
</dbReference>
<dbReference type="PANTHER" id="PTHR31241:SF37">
    <property type="entry name" value="DEHYDRATION-RESPONSIVE ELEMENT-BINDING PROTEIN 2A-RELATED"/>
    <property type="match status" value="1"/>
</dbReference>
<dbReference type="PANTHER" id="PTHR31241">
    <property type="entry name" value="DEHYDRATION-RESPONSIVE ELEMENT-BINDING PROTEIN 2C"/>
    <property type="match status" value="1"/>
</dbReference>
<dbReference type="Pfam" id="PF00847">
    <property type="entry name" value="AP2"/>
    <property type="match status" value="1"/>
</dbReference>
<dbReference type="PRINTS" id="PR00367">
    <property type="entry name" value="ETHRSPELEMNT"/>
</dbReference>
<dbReference type="SMART" id="SM00380">
    <property type="entry name" value="AP2"/>
    <property type="match status" value="1"/>
</dbReference>
<dbReference type="SUPFAM" id="SSF54171">
    <property type="entry name" value="DNA-binding domain"/>
    <property type="match status" value="1"/>
</dbReference>
<dbReference type="PROSITE" id="PS51032">
    <property type="entry name" value="AP2_ERF"/>
    <property type="match status" value="1"/>
</dbReference>
<comment type="function">
    <text evidence="4">Transcriptional activator that binds specifically to the DNA sequence 5'-[AG]CCGAC-3'. Binding to the C-repeat/DRE element mediates high salinity- and abscisic acid-inducible transcription.</text>
</comment>
<comment type="subcellular location">
    <subcellularLocation>
        <location evidence="5">Nucleus</location>
    </subcellularLocation>
</comment>
<comment type="induction">
    <text evidence="4">By high-salt stress and abscisic acid (ABA) treatment.</text>
</comment>
<comment type="similarity">
    <text evidence="5">Belongs to the AP2/ERF transcription factor family. ERF subfamily.</text>
</comment>
<comment type="sequence caution" evidence="5">
    <conflict type="erroneous gene model prediction">
        <sequence resource="EMBL-CDS" id="AAD25951"/>
    </conflict>
</comment>
<reference key="1">
    <citation type="journal article" date="1999" name="Genome Res.">
        <title>A cluster of ABA-regulated genes on Arabidopsis thaliana BAC T07M07.</title>
        <authorList>
            <person name="Wang M.L."/>
            <person name="Belmonte S."/>
            <person name="Kim U."/>
            <person name="Dolan M."/>
            <person name="Morris J.W."/>
            <person name="Goodman H.M."/>
        </authorList>
    </citation>
    <scope>NUCLEOTIDE SEQUENCE [GENOMIC DNA]</scope>
</reference>
<reference key="2">
    <citation type="journal article" date="1999" name="Nature">
        <title>Sequence and analysis of chromosome 2 of the plant Arabidopsis thaliana.</title>
        <authorList>
            <person name="Lin X."/>
            <person name="Kaul S."/>
            <person name="Rounsley S.D."/>
            <person name="Shea T.P."/>
            <person name="Benito M.-I."/>
            <person name="Town C.D."/>
            <person name="Fujii C.Y."/>
            <person name="Mason T.M."/>
            <person name="Bowman C.L."/>
            <person name="Barnstead M.E."/>
            <person name="Feldblyum T.V."/>
            <person name="Buell C.R."/>
            <person name="Ketchum K.A."/>
            <person name="Lee J.J."/>
            <person name="Ronning C.M."/>
            <person name="Koo H.L."/>
            <person name="Moffat K.S."/>
            <person name="Cronin L.A."/>
            <person name="Shen M."/>
            <person name="Pai G."/>
            <person name="Van Aken S."/>
            <person name="Umayam L."/>
            <person name="Tallon L.J."/>
            <person name="Gill J.E."/>
            <person name="Adams M.D."/>
            <person name="Carrera A.J."/>
            <person name="Creasy T.H."/>
            <person name="Goodman H.M."/>
            <person name="Somerville C.R."/>
            <person name="Copenhaver G.P."/>
            <person name="Preuss D."/>
            <person name="Nierman W.C."/>
            <person name="White O."/>
            <person name="Eisen J.A."/>
            <person name="Salzberg S.L."/>
            <person name="Fraser C.M."/>
            <person name="Venter J.C."/>
        </authorList>
    </citation>
    <scope>NUCLEOTIDE SEQUENCE [LARGE SCALE GENOMIC DNA]</scope>
    <source>
        <strain>cv. Columbia</strain>
    </source>
</reference>
<reference key="3">
    <citation type="journal article" date="2017" name="Plant J.">
        <title>Araport11: a complete reannotation of the Arabidopsis thaliana reference genome.</title>
        <authorList>
            <person name="Cheng C.Y."/>
            <person name="Krishnakumar V."/>
            <person name="Chan A.P."/>
            <person name="Thibaud-Nissen F."/>
            <person name="Schobel S."/>
            <person name="Town C.D."/>
        </authorList>
    </citation>
    <scope>GENOME REANNOTATION</scope>
    <source>
        <strain>cv. Columbia</strain>
    </source>
</reference>
<reference key="4">
    <citation type="submission" date="2006-08" db="EMBL/GenBank/DDBJ databases">
        <title>Arabidopsis ORF clones.</title>
        <authorList>
            <person name="Quinitio C."/>
            <person name="Chen H."/>
            <person name="Kim C.J."/>
            <person name="Shinn P."/>
            <person name="Ecker J.R."/>
        </authorList>
    </citation>
    <scope>NUCLEOTIDE SEQUENCE [LARGE SCALE MRNA]</scope>
    <source>
        <strain>cv. Columbia</strain>
    </source>
</reference>
<reference key="5">
    <citation type="submission" date="2002-03" db="EMBL/GenBank/DDBJ databases">
        <title>Full-length cDNA from Arabidopsis thaliana.</title>
        <authorList>
            <person name="Brover V.V."/>
            <person name="Troukhan M.E."/>
            <person name="Alexandrov N.A."/>
            <person name="Lu Y.-P."/>
            <person name="Flavell R.B."/>
            <person name="Feldmann K.A."/>
        </authorList>
    </citation>
    <scope>NUCLEOTIDE SEQUENCE [LARGE SCALE MRNA]</scope>
</reference>
<reference key="6">
    <citation type="journal article" date="2002" name="Biochem. Biophys. Res. Commun.">
        <title>DNA-binding specificity of the ERF/AP2 domain of Arabidopsis DREBs, transcription factors involved in dehydration- and cold-inducible gene expression.</title>
        <authorList>
            <person name="Sakuma Y."/>
            <person name="Liu Q."/>
            <person name="Dubouzet J.G."/>
            <person name="Abe H."/>
            <person name="Shinozaki K."/>
            <person name="Yamaguchi-Shinozaki K."/>
        </authorList>
    </citation>
    <scope>GENE FAMILY</scope>
    <scope>FUNCTION</scope>
    <scope>INDUCTION</scope>
</reference>
<reference key="7">
    <citation type="journal article" date="2006" name="Plant Physiol.">
        <title>Genome-wide analysis of the ERF gene family in Arabidopsis and rice.</title>
        <authorList>
            <person name="Nakano T."/>
            <person name="Suzuki K."/>
            <person name="Fujimura T."/>
            <person name="Shinshi H."/>
        </authorList>
    </citation>
    <scope>GENE FAMILY</scope>
    <scope>NOMENCLATURE</scope>
</reference>
<proteinExistence type="evidence at transcript level"/>
<feature type="chain" id="PRO_0000112536" description="Dehydration-responsive element-binding protein 2C">
    <location>
        <begin position="1"/>
        <end position="341"/>
    </location>
</feature>
<feature type="DNA-binding region" description="AP2/ERF" evidence="2">
    <location>
        <begin position="71"/>
        <end position="128"/>
    </location>
</feature>
<feature type="region of interest" description="Disordered" evidence="3">
    <location>
        <begin position="36"/>
        <end position="63"/>
    </location>
</feature>
<feature type="short sequence motif" description="Nuclear localization signal" evidence="1">
    <location>
        <begin position="8"/>
        <end position="48"/>
    </location>
</feature>
<feature type="compositionally biased region" description="Basic residues" evidence="3">
    <location>
        <begin position="45"/>
        <end position="59"/>
    </location>
</feature>
<feature type="sequence conflict" description="In Ref. 4; AAM61256." evidence="5" ref="4">
    <original>G</original>
    <variation>E</variation>
    <location>
        <position position="74"/>
    </location>
</feature>
<protein>
    <recommendedName>
        <fullName>Dehydration-responsive element-binding protein 2C</fullName>
        <shortName>Protein DREB2C</shortName>
    </recommendedName>
</protein>
<sequence length="341" mass="37830">MPSEIVDRKRKSRGTRDVAEILRQWREYNEQIEAESCIDGGGPKSIRKPPPKGSRKGCMKGKGGPENGICDYRGVRQRRWGKWVAEIREPDGGARLWLGTFSSSYEAALAYDEAAKAIYGQSARLNLPEITNRSSSTAATATVSGSVTAFSDESEVCAREDTNASSGFGQVKLEDCSDEYVLLDSSQCIKEELKGKEEVREEHNLAVGFGIGQDSKRETLDAWLMGNGNEQEPLEFGVDETFDINELLGILNDNNVSGQETMQYQVDRHPNFSYQTQFPNSNLLGSLNPMEIAQPGVDYGCPYVQPSDMENYGIDLDHRRFNDLDIQDLDFGGDKDVHGST</sequence>
<evidence type="ECO:0000255" key="1"/>
<evidence type="ECO:0000255" key="2">
    <source>
        <dbReference type="PROSITE-ProRule" id="PRU00366"/>
    </source>
</evidence>
<evidence type="ECO:0000256" key="3">
    <source>
        <dbReference type="SAM" id="MobiDB-lite"/>
    </source>
</evidence>
<evidence type="ECO:0000269" key="4">
    <source>
    </source>
</evidence>
<evidence type="ECO:0000305" key="5"/>
<name>DRE2C_ARATH</name>